<name>HCP_ECO27</name>
<sequence>MFCVQCEQTIRTPAGNGCSYAQGMCGKTAETSDLQDLLIAALQGLSAWAVKAREYGIINHDVDSFAPRAFFSTLTNVNFDSPRIVGYAREAIALREALKAQCLAVDANARVDNPMADLQLVSDDLGELQRQAAEFTPNKDKAAIGENILGLRLLCLYGLKGAAAYMEHAHVLGQYDNDIYAQYHKIMAWLGTWPADMNALLECSMEIGQMNFKVMSILDAGETGKYGHPTPTQVNVKATAGKCILISGHDLKDLYNLLEQTEGTGVNVYTHGEMLPAHGYPELRKFKHLVGNYGSGWQNQQVEFARFPGPIVMTSNCIIDPTVGAYDDRIWTRSIVGWPGVRHLDGEDFSAVIAQAQQMAGFPYSEIPHLITVGFGRQTLLGAADTLIDLVSREKLRHIFLLGGCDGARGERHYFTDFATSVPDDCLILTLACGKYRFNKLEFGDIEGLPRLVDAGQCNDAYSAIILAVTLAEKLGCGVNDLPLSLVLSWFEQKAIVILLTLLSLGVKNIVTGPTAPGFLTPDLLAVLNEKFGLRSITTVEEDMKQLLSA</sequence>
<proteinExistence type="inferred from homology"/>
<gene>
    <name evidence="1" type="primary">hcp</name>
    <name type="ordered locus">E2348C_0870</name>
</gene>
<organism>
    <name type="scientific">Escherichia coli O127:H6 (strain E2348/69 / EPEC)</name>
    <dbReference type="NCBI Taxonomy" id="574521"/>
    <lineage>
        <taxon>Bacteria</taxon>
        <taxon>Pseudomonadati</taxon>
        <taxon>Pseudomonadota</taxon>
        <taxon>Gammaproteobacteria</taxon>
        <taxon>Enterobacterales</taxon>
        <taxon>Enterobacteriaceae</taxon>
        <taxon>Escherichia</taxon>
    </lineage>
</organism>
<reference key="1">
    <citation type="journal article" date="2009" name="J. Bacteriol.">
        <title>Complete genome sequence and comparative genome analysis of enteropathogenic Escherichia coli O127:H6 strain E2348/69.</title>
        <authorList>
            <person name="Iguchi A."/>
            <person name="Thomson N.R."/>
            <person name="Ogura Y."/>
            <person name="Saunders D."/>
            <person name="Ooka T."/>
            <person name="Henderson I.R."/>
            <person name="Harris D."/>
            <person name="Asadulghani M."/>
            <person name="Kurokawa K."/>
            <person name="Dean P."/>
            <person name="Kenny B."/>
            <person name="Quail M.A."/>
            <person name="Thurston S."/>
            <person name="Dougan G."/>
            <person name="Hayashi T."/>
            <person name="Parkhill J."/>
            <person name="Frankel G."/>
        </authorList>
    </citation>
    <scope>NUCLEOTIDE SEQUENCE [LARGE SCALE GENOMIC DNA]</scope>
    <source>
        <strain>E2348/69 / EPEC</strain>
    </source>
</reference>
<protein>
    <recommendedName>
        <fullName evidence="1">Hydroxylamine reductase</fullName>
        <ecNumber evidence="1">1.7.99.1</ecNumber>
    </recommendedName>
    <alternativeName>
        <fullName evidence="1">Hybrid-cluster protein</fullName>
        <shortName evidence="1">HCP</shortName>
    </alternativeName>
    <alternativeName>
        <fullName evidence="1">Prismane protein</fullName>
    </alternativeName>
</protein>
<evidence type="ECO:0000255" key="1">
    <source>
        <dbReference type="HAMAP-Rule" id="MF_00069"/>
    </source>
</evidence>
<keyword id="KW-0001">2Fe-2S</keyword>
<keyword id="KW-0963">Cytoplasm</keyword>
<keyword id="KW-0408">Iron</keyword>
<keyword id="KW-0411">Iron-sulfur</keyword>
<keyword id="KW-0479">Metal-binding</keyword>
<keyword id="KW-0560">Oxidoreductase</keyword>
<keyword id="KW-1185">Reference proteome</keyword>
<accession>B7UMW5</accession>
<comment type="function">
    <text evidence="1">Catalyzes the reduction of hydroxylamine to form NH(3) and H(2)O.</text>
</comment>
<comment type="catalytic activity">
    <reaction evidence="1">
        <text>A + NH4(+) + H2O = hydroxylamine + AH2 + H(+)</text>
        <dbReference type="Rhea" id="RHEA:22052"/>
        <dbReference type="ChEBI" id="CHEBI:13193"/>
        <dbReference type="ChEBI" id="CHEBI:15377"/>
        <dbReference type="ChEBI" id="CHEBI:15378"/>
        <dbReference type="ChEBI" id="CHEBI:15429"/>
        <dbReference type="ChEBI" id="CHEBI:17499"/>
        <dbReference type="ChEBI" id="CHEBI:28938"/>
        <dbReference type="EC" id="1.7.99.1"/>
    </reaction>
</comment>
<comment type="cofactor">
    <cofactor evidence="1">
        <name>[2Fe-2S] cluster</name>
        <dbReference type="ChEBI" id="CHEBI:190135"/>
    </cofactor>
    <text evidence="1">Binds 1 [2Fe-2S] cluster.</text>
</comment>
<comment type="cofactor">
    <cofactor evidence="1">
        <name>hybrid [4Fe-2O-2S] cluster</name>
        <dbReference type="ChEBI" id="CHEBI:60519"/>
    </cofactor>
    <text evidence="1">Binds 1 hybrid [4Fe-2O-2S] cluster.</text>
</comment>
<comment type="subcellular location">
    <subcellularLocation>
        <location evidence="1">Cytoplasm</location>
    </subcellularLocation>
</comment>
<comment type="similarity">
    <text evidence="1">Belongs to the HCP family.</text>
</comment>
<dbReference type="EC" id="1.7.99.1" evidence="1"/>
<dbReference type="EMBL" id="FM180568">
    <property type="protein sequence ID" value="CAS08418.1"/>
    <property type="molecule type" value="Genomic_DNA"/>
</dbReference>
<dbReference type="RefSeq" id="WP_000458817.1">
    <property type="nucleotide sequence ID" value="NC_011601.1"/>
</dbReference>
<dbReference type="SMR" id="B7UMW5"/>
<dbReference type="GeneID" id="75202475"/>
<dbReference type="KEGG" id="ecg:E2348C_0870"/>
<dbReference type="HOGENOM" id="CLU_038344_2_0_6"/>
<dbReference type="Proteomes" id="UP000008205">
    <property type="component" value="Chromosome"/>
</dbReference>
<dbReference type="GO" id="GO:0005737">
    <property type="term" value="C:cytoplasm"/>
    <property type="evidence" value="ECO:0007669"/>
    <property type="project" value="UniProtKB-SubCell"/>
</dbReference>
<dbReference type="GO" id="GO:0051537">
    <property type="term" value="F:2 iron, 2 sulfur cluster binding"/>
    <property type="evidence" value="ECO:0007669"/>
    <property type="project" value="UniProtKB-KW"/>
</dbReference>
<dbReference type="GO" id="GO:0050418">
    <property type="term" value="F:hydroxylamine reductase activity"/>
    <property type="evidence" value="ECO:0007669"/>
    <property type="project" value="UniProtKB-UniRule"/>
</dbReference>
<dbReference type="GO" id="GO:0046872">
    <property type="term" value="F:metal ion binding"/>
    <property type="evidence" value="ECO:0007669"/>
    <property type="project" value="UniProtKB-KW"/>
</dbReference>
<dbReference type="GO" id="GO:0004601">
    <property type="term" value="F:peroxidase activity"/>
    <property type="evidence" value="ECO:0007669"/>
    <property type="project" value="TreeGrafter"/>
</dbReference>
<dbReference type="GO" id="GO:0042542">
    <property type="term" value="P:response to hydrogen peroxide"/>
    <property type="evidence" value="ECO:0007669"/>
    <property type="project" value="TreeGrafter"/>
</dbReference>
<dbReference type="CDD" id="cd01914">
    <property type="entry name" value="HCP"/>
    <property type="match status" value="1"/>
</dbReference>
<dbReference type="FunFam" id="1.20.1270.20:FF:000001">
    <property type="entry name" value="Hydroxylamine reductase"/>
    <property type="match status" value="1"/>
</dbReference>
<dbReference type="FunFam" id="1.20.1270.20:FF:000002">
    <property type="entry name" value="Hydroxylamine reductase"/>
    <property type="match status" value="1"/>
</dbReference>
<dbReference type="FunFam" id="3.40.50.2030:FF:000001">
    <property type="entry name" value="Hydroxylamine reductase"/>
    <property type="match status" value="1"/>
</dbReference>
<dbReference type="FunFam" id="3.40.50.2030:FF:000002">
    <property type="entry name" value="Hydroxylamine reductase"/>
    <property type="match status" value="1"/>
</dbReference>
<dbReference type="Gene3D" id="1.20.1270.20">
    <property type="match status" value="2"/>
</dbReference>
<dbReference type="Gene3D" id="3.40.50.2030">
    <property type="match status" value="2"/>
</dbReference>
<dbReference type="HAMAP" id="MF_00069">
    <property type="entry name" value="Hydroxylam_reduct"/>
    <property type="match status" value="1"/>
</dbReference>
<dbReference type="InterPro" id="IPR004137">
    <property type="entry name" value="HCP/CODH"/>
</dbReference>
<dbReference type="InterPro" id="IPR010048">
    <property type="entry name" value="Hydroxylam_reduct"/>
</dbReference>
<dbReference type="InterPro" id="IPR016099">
    <property type="entry name" value="Prismane-like_a/b-sand"/>
</dbReference>
<dbReference type="InterPro" id="IPR011254">
    <property type="entry name" value="Prismane-like_sf"/>
</dbReference>
<dbReference type="InterPro" id="IPR016100">
    <property type="entry name" value="Prismane_a-bundle"/>
</dbReference>
<dbReference type="NCBIfam" id="TIGR01703">
    <property type="entry name" value="hybrid_clust"/>
    <property type="match status" value="1"/>
</dbReference>
<dbReference type="NCBIfam" id="NF003658">
    <property type="entry name" value="PRK05290.1"/>
    <property type="match status" value="1"/>
</dbReference>
<dbReference type="PANTHER" id="PTHR30109">
    <property type="entry name" value="HYDROXYLAMINE REDUCTASE"/>
    <property type="match status" value="1"/>
</dbReference>
<dbReference type="PANTHER" id="PTHR30109:SF0">
    <property type="entry name" value="HYDROXYLAMINE REDUCTASE"/>
    <property type="match status" value="1"/>
</dbReference>
<dbReference type="Pfam" id="PF03063">
    <property type="entry name" value="Prismane"/>
    <property type="match status" value="1"/>
</dbReference>
<dbReference type="PIRSF" id="PIRSF000076">
    <property type="entry name" value="HCP"/>
    <property type="match status" value="1"/>
</dbReference>
<dbReference type="SUPFAM" id="SSF56821">
    <property type="entry name" value="Prismane protein-like"/>
    <property type="match status" value="1"/>
</dbReference>
<feature type="chain" id="PRO_1000118018" description="Hydroxylamine reductase">
    <location>
        <begin position="1"/>
        <end position="550"/>
    </location>
</feature>
<feature type="binding site" evidence="1">
    <location>
        <position position="3"/>
    </location>
    <ligand>
        <name>[2Fe-2S] cluster</name>
        <dbReference type="ChEBI" id="CHEBI:190135"/>
    </ligand>
</feature>
<feature type="binding site" evidence="1">
    <location>
        <position position="6"/>
    </location>
    <ligand>
        <name>[2Fe-2S] cluster</name>
        <dbReference type="ChEBI" id="CHEBI:190135"/>
    </ligand>
</feature>
<feature type="binding site" evidence="1">
    <location>
        <position position="18"/>
    </location>
    <ligand>
        <name>[2Fe-2S] cluster</name>
        <dbReference type="ChEBI" id="CHEBI:190135"/>
    </ligand>
</feature>
<feature type="binding site" evidence="1">
    <location>
        <position position="25"/>
    </location>
    <ligand>
        <name>[2Fe-2S] cluster</name>
        <dbReference type="ChEBI" id="CHEBI:190135"/>
    </ligand>
</feature>
<feature type="binding site" evidence="1">
    <location>
        <position position="249"/>
    </location>
    <ligand>
        <name>hybrid [4Fe-2O-2S] cluster</name>
        <dbReference type="ChEBI" id="CHEBI:60519"/>
    </ligand>
</feature>
<feature type="binding site" evidence="1">
    <location>
        <position position="273"/>
    </location>
    <ligand>
        <name>hybrid [4Fe-2O-2S] cluster</name>
        <dbReference type="ChEBI" id="CHEBI:60519"/>
    </ligand>
</feature>
<feature type="binding site" evidence="1">
    <location>
        <position position="317"/>
    </location>
    <ligand>
        <name>hybrid [4Fe-2O-2S] cluster</name>
        <dbReference type="ChEBI" id="CHEBI:60519"/>
    </ligand>
</feature>
<feature type="binding site" description="via persulfide group" evidence="1">
    <location>
        <position position="405"/>
    </location>
    <ligand>
        <name>hybrid [4Fe-2O-2S] cluster</name>
        <dbReference type="ChEBI" id="CHEBI:60519"/>
    </ligand>
</feature>
<feature type="binding site" evidence="1">
    <location>
        <position position="433"/>
    </location>
    <ligand>
        <name>hybrid [4Fe-2O-2S] cluster</name>
        <dbReference type="ChEBI" id="CHEBI:60519"/>
    </ligand>
</feature>
<feature type="binding site" evidence="1">
    <location>
        <position position="458"/>
    </location>
    <ligand>
        <name>hybrid [4Fe-2O-2S] cluster</name>
        <dbReference type="ChEBI" id="CHEBI:60519"/>
    </ligand>
</feature>
<feature type="binding site" evidence="1">
    <location>
        <position position="492"/>
    </location>
    <ligand>
        <name>hybrid [4Fe-2O-2S] cluster</name>
        <dbReference type="ChEBI" id="CHEBI:60519"/>
    </ligand>
</feature>
<feature type="binding site" evidence="1">
    <location>
        <position position="494"/>
    </location>
    <ligand>
        <name>hybrid [4Fe-2O-2S] cluster</name>
        <dbReference type="ChEBI" id="CHEBI:60519"/>
    </ligand>
</feature>
<feature type="modified residue" description="Cysteine persulfide" evidence="1">
    <location>
        <position position="405"/>
    </location>
</feature>